<keyword id="KW-0046">Antibiotic resistance</keyword>
<keyword id="KW-0997">Cell inner membrane</keyword>
<keyword id="KW-1003">Cell membrane</keyword>
<keyword id="KW-0472">Membrane</keyword>
<keyword id="KW-0812">Transmembrane</keyword>
<keyword id="KW-1133">Transmembrane helix</keyword>
<keyword id="KW-0813">Transport</keyword>
<reference key="1">
    <citation type="journal article" date="2008" name="J. Bacteriol.">
        <title>The pangenome structure of Escherichia coli: comparative genomic analysis of E. coli commensal and pathogenic isolates.</title>
        <authorList>
            <person name="Rasko D.A."/>
            <person name="Rosovitz M.J."/>
            <person name="Myers G.S.A."/>
            <person name="Mongodin E.F."/>
            <person name="Fricke W.F."/>
            <person name="Gajer P."/>
            <person name="Crabtree J."/>
            <person name="Sebaihia M."/>
            <person name="Thomson N.R."/>
            <person name="Chaudhuri R."/>
            <person name="Henderson I.R."/>
            <person name="Sperandio V."/>
            <person name="Ravel J."/>
        </authorList>
    </citation>
    <scope>NUCLEOTIDE SEQUENCE [LARGE SCALE GENOMIC DNA]</scope>
    <source>
        <strain>HS</strain>
    </source>
</reference>
<protein>
    <recommendedName>
        <fullName evidence="1">Multidrug resistance protein MdtH</fullName>
    </recommendedName>
</protein>
<organism>
    <name type="scientific">Escherichia coli O9:H4 (strain HS)</name>
    <dbReference type="NCBI Taxonomy" id="331112"/>
    <lineage>
        <taxon>Bacteria</taxon>
        <taxon>Pseudomonadati</taxon>
        <taxon>Pseudomonadota</taxon>
        <taxon>Gammaproteobacteria</taxon>
        <taxon>Enterobacterales</taxon>
        <taxon>Enterobacteriaceae</taxon>
        <taxon>Escherichia</taxon>
    </lineage>
</organism>
<comment type="function">
    <text evidence="1">Confers resistance to norfloxacin and enoxacin.</text>
</comment>
<comment type="subcellular location">
    <subcellularLocation>
        <location evidence="1">Cell inner membrane</location>
        <topology evidence="1">Multi-pass membrane protein</topology>
    </subcellularLocation>
</comment>
<comment type="similarity">
    <text evidence="1">Belongs to the major facilitator superfamily. DHA1 family. MdtH (TC 2.A.1.2.21) subfamily.</text>
</comment>
<gene>
    <name evidence="1" type="primary">mdtH</name>
    <name type="ordered locus">EcHS_A1188</name>
</gene>
<feature type="chain" id="PRO_1000068677" description="Multidrug resistance protein MdtH">
    <location>
        <begin position="1"/>
        <end position="402"/>
    </location>
</feature>
<feature type="topological domain" description="Cytoplasmic" evidence="1">
    <location>
        <begin position="1"/>
        <end position="12"/>
    </location>
</feature>
<feature type="transmembrane region" description="Helical" evidence="1">
    <location>
        <begin position="13"/>
        <end position="33"/>
    </location>
</feature>
<feature type="topological domain" description="Periplasmic" evidence="1">
    <location>
        <begin position="34"/>
        <end position="98"/>
    </location>
</feature>
<feature type="transmembrane region" description="Helical" evidence="1">
    <location>
        <begin position="99"/>
        <end position="116"/>
    </location>
</feature>
<feature type="topological domain" description="Cytoplasmic" evidence="1">
    <location>
        <begin position="117"/>
        <end position="138"/>
    </location>
</feature>
<feature type="transmembrane region" description="Helical" evidence="1">
    <location>
        <begin position="139"/>
        <end position="159"/>
    </location>
</feature>
<feature type="topological domain" description="Periplasmic" evidence="1">
    <location>
        <begin position="160"/>
        <end position="164"/>
    </location>
</feature>
<feature type="transmembrane region" description="Helical" evidence="1">
    <location>
        <begin position="165"/>
        <end position="185"/>
    </location>
</feature>
<feature type="topological domain" description="Cytoplasmic" evidence="1">
    <location>
        <begin position="186"/>
        <end position="213"/>
    </location>
</feature>
<feature type="transmembrane region" description="Helical" evidence="1">
    <location>
        <begin position="214"/>
        <end position="234"/>
    </location>
</feature>
<feature type="topological domain" description="Periplasmic" evidence="1">
    <location>
        <begin position="235"/>
        <end position="243"/>
    </location>
</feature>
<feature type="transmembrane region" description="Helical" evidence="1">
    <location>
        <begin position="244"/>
        <end position="264"/>
    </location>
</feature>
<feature type="topological domain" description="Cytoplasmic" evidence="1">
    <location>
        <begin position="265"/>
        <end position="276"/>
    </location>
</feature>
<feature type="transmembrane region" description="Helical" evidence="1">
    <location>
        <begin position="277"/>
        <end position="297"/>
    </location>
</feature>
<feature type="topological domain" description="Periplasmic" evidence="1">
    <location>
        <begin position="298"/>
        <end position="299"/>
    </location>
</feature>
<feature type="transmembrane region" description="Helical" evidence="1">
    <location>
        <begin position="300"/>
        <end position="320"/>
    </location>
</feature>
<feature type="topological domain" description="Cytoplasmic" evidence="1">
    <location>
        <begin position="321"/>
        <end position="339"/>
    </location>
</feature>
<feature type="transmembrane region" description="Helical" evidence="1">
    <location>
        <begin position="340"/>
        <end position="360"/>
    </location>
</feature>
<feature type="topological domain" description="Periplasmic" evidence="1">
    <location>
        <begin position="361"/>
        <end position="367"/>
    </location>
</feature>
<feature type="transmembrane region" description="Helical" evidence="1">
    <location>
        <begin position="368"/>
        <end position="388"/>
    </location>
</feature>
<feature type="topological domain" description="Cytoplasmic" evidence="1">
    <location>
        <begin position="389"/>
        <end position="402"/>
    </location>
</feature>
<name>MDTH_ECOHS</name>
<dbReference type="EMBL" id="CP000802">
    <property type="protein sequence ID" value="ABV05527.1"/>
    <property type="molecule type" value="Genomic_DNA"/>
</dbReference>
<dbReference type="RefSeq" id="WP_000092199.1">
    <property type="nucleotide sequence ID" value="NC_009800.1"/>
</dbReference>
<dbReference type="SMR" id="A7ZZ23"/>
<dbReference type="KEGG" id="ecx:EcHS_A1188"/>
<dbReference type="HOGENOM" id="CLU_001265_60_2_6"/>
<dbReference type="GO" id="GO:0005886">
    <property type="term" value="C:plasma membrane"/>
    <property type="evidence" value="ECO:0007669"/>
    <property type="project" value="UniProtKB-SubCell"/>
</dbReference>
<dbReference type="GO" id="GO:0022857">
    <property type="term" value="F:transmembrane transporter activity"/>
    <property type="evidence" value="ECO:0007669"/>
    <property type="project" value="UniProtKB-UniRule"/>
</dbReference>
<dbReference type="GO" id="GO:0046677">
    <property type="term" value="P:response to antibiotic"/>
    <property type="evidence" value="ECO:0007669"/>
    <property type="project" value="UniProtKB-KW"/>
</dbReference>
<dbReference type="CDD" id="cd17329">
    <property type="entry name" value="MFS_MdtH_MDR_like"/>
    <property type="match status" value="1"/>
</dbReference>
<dbReference type="FunFam" id="1.20.1250.20:FF:000039">
    <property type="entry name" value="Multidrug resistance protein MdtH"/>
    <property type="match status" value="1"/>
</dbReference>
<dbReference type="Gene3D" id="1.20.1250.20">
    <property type="entry name" value="MFS general substrate transporter like domains"/>
    <property type="match status" value="1"/>
</dbReference>
<dbReference type="HAMAP" id="MF_01529">
    <property type="entry name" value="MFS_MdtH"/>
    <property type="match status" value="1"/>
</dbReference>
<dbReference type="InterPro" id="IPR011701">
    <property type="entry name" value="MFS"/>
</dbReference>
<dbReference type="InterPro" id="IPR020846">
    <property type="entry name" value="MFS_dom"/>
</dbReference>
<dbReference type="InterPro" id="IPR036259">
    <property type="entry name" value="MFS_trans_sf"/>
</dbReference>
<dbReference type="InterPro" id="IPR050171">
    <property type="entry name" value="MFS_Transporters"/>
</dbReference>
<dbReference type="InterPro" id="IPR022855">
    <property type="entry name" value="Multidrug-R_MdtH"/>
</dbReference>
<dbReference type="NCBIfam" id="NF008650">
    <property type="entry name" value="PRK11646.1"/>
    <property type="match status" value="1"/>
</dbReference>
<dbReference type="PANTHER" id="PTHR23517:SF2">
    <property type="entry name" value="MULTIDRUG RESISTANCE PROTEIN MDTH"/>
    <property type="match status" value="1"/>
</dbReference>
<dbReference type="PANTHER" id="PTHR23517">
    <property type="entry name" value="RESISTANCE PROTEIN MDTM, PUTATIVE-RELATED-RELATED"/>
    <property type="match status" value="1"/>
</dbReference>
<dbReference type="Pfam" id="PF07690">
    <property type="entry name" value="MFS_1"/>
    <property type="match status" value="1"/>
</dbReference>
<dbReference type="SUPFAM" id="SSF103473">
    <property type="entry name" value="MFS general substrate transporter"/>
    <property type="match status" value="1"/>
</dbReference>
<dbReference type="PROSITE" id="PS50850">
    <property type="entry name" value="MFS"/>
    <property type="match status" value="1"/>
</dbReference>
<proteinExistence type="inferred from homology"/>
<evidence type="ECO:0000255" key="1">
    <source>
        <dbReference type="HAMAP-Rule" id="MF_01529"/>
    </source>
</evidence>
<sequence length="402" mass="44376">MSRVSQARNLGKYFLLIDNMLVVLGFFVVFPLISIRFVDQMGWAAVMVGIALGLRQFIQQGLGIFGGAIADRFGAKPMIVTGMLMRAAGFATMGIAHEPWLLWFSCLLSGLGGTLFDPPRSALVVKLIRPQQRGRFFSLLMMQDSAGAVIGALLGSWLLQYDFRLVCATGAVLFVLCAAFNAWLLPAWKLSTVRTPVREGMTRVMRDKRFVTYVLTLAGYYMLAVQVMLMLPIMVNDVAGAPSAVKWMYAIEACLSLTLLYPIARWSEKHFRLEHRLMAGLLIMSLSMMPVGMVSGLQQLFNLICLFYIGSIIAEPARETLSASLADARARGSYMGFSRLGLAIGGAIGYIGGGWLFDLGKSAHQPELPWMMLGIIGIFTFLALGWQFSQKRAARRLLERDA</sequence>
<accession>A7ZZ23</accession>